<keyword id="KW-0963">Cytoplasm</keyword>
<keyword id="KW-0539">Nucleus</keyword>
<keyword id="KW-1185">Reference proteome</keyword>
<keyword id="KW-0749">Sporulation</keyword>
<keyword id="KW-0804">Transcription</keyword>
<keyword id="KW-0805">Transcription regulation</keyword>
<dbReference type="EMBL" id="CM001234">
    <property type="protein sequence ID" value="EHA49754.1"/>
    <property type="molecule type" value="Genomic_DNA"/>
</dbReference>
<dbReference type="RefSeq" id="XP_003716073.1">
    <property type="nucleotide sequence ID" value="XM_003716025.1"/>
</dbReference>
<dbReference type="SMR" id="G4N5X8"/>
<dbReference type="STRING" id="242507.G4N5X8"/>
<dbReference type="EnsemblFungi" id="MGG_08556T0">
    <property type="protein sequence ID" value="MGG_08556T0"/>
    <property type="gene ID" value="MGG_08556"/>
</dbReference>
<dbReference type="GeneID" id="2678672"/>
<dbReference type="KEGG" id="mgr:MGG_08556"/>
<dbReference type="VEuPathDB" id="FungiDB:MGG_08556"/>
<dbReference type="eggNOG" id="ENOG502QVY9">
    <property type="taxonomic scope" value="Eukaryota"/>
</dbReference>
<dbReference type="HOGENOM" id="CLU_022491_2_0_1"/>
<dbReference type="InParanoid" id="G4N5X8"/>
<dbReference type="OMA" id="TDITFSY"/>
<dbReference type="OrthoDB" id="5384689at2759"/>
<dbReference type="PHI-base" id="PHI:4113"/>
<dbReference type="Proteomes" id="UP000009058">
    <property type="component" value="Chromosome 4"/>
</dbReference>
<dbReference type="GO" id="GO:0005737">
    <property type="term" value="C:cytoplasm"/>
    <property type="evidence" value="ECO:0007669"/>
    <property type="project" value="UniProtKB-SubCell"/>
</dbReference>
<dbReference type="GO" id="GO:0005634">
    <property type="term" value="C:nucleus"/>
    <property type="evidence" value="ECO:0007669"/>
    <property type="project" value="UniProtKB-SubCell"/>
</dbReference>
<dbReference type="GO" id="GO:0030435">
    <property type="term" value="P:sporulation resulting in formation of a cellular spore"/>
    <property type="evidence" value="ECO:0007669"/>
    <property type="project" value="UniProtKB-KW"/>
</dbReference>
<dbReference type="FunFam" id="2.60.40.3960:FF:000001">
    <property type="entry name" value="Sexual development activator VeA"/>
    <property type="match status" value="1"/>
</dbReference>
<dbReference type="Gene3D" id="2.60.40.3960">
    <property type="entry name" value="Velvet domain"/>
    <property type="match status" value="1"/>
</dbReference>
<dbReference type="InterPro" id="IPR021740">
    <property type="entry name" value="Velvet"/>
</dbReference>
<dbReference type="InterPro" id="IPR037525">
    <property type="entry name" value="Velvet_dom"/>
</dbReference>
<dbReference type="InterPro" id="IPR038491">
    <property type="entry name" value="Velvet_dom_sf"/>
</dbReference>
<dbReference type="PANTHER" id="PTHR33572:SF14">
    <property type="entry name" value="DEVELOPMENTAL AND SECONDARY METABOLISM REGULATOR VEA"/>
    <property type="match status" value="1"/>
</dbReference>
<dbReference type="PANTHER" id="PTHR33572">
    <property type="entry name" value="SPORE DEVELOPMENT REGULATOR VOSA"/>
    <property type="match status" value="1"/>
</dbReference>
<dbReference type="Pfam" id="PF11754">
    <property type="entry name" value="Velvet"/>
    <property type="match status" value="2"/>
</dbReference>
<dbReference type="PROSITE" id="PS51821">
    <property type="entry name" value="VELVET"/>
    <property type="match status" value="1"/>
</dbReference>
<accession>G4N5X8</accession>
<reference key="1">
    <citation type="journal article" date="2005" name="Nature">
        <title>The genome sequence of the rice blast fungus Magnaporthe grisea.</title>
        <authorList>
            <person name="Dean R.A."/>
            <person name="Talbot N.J."/>
            <person name="Ebbole D.J."/>
            <person name="Farman M.L."/>
            <person name="Mitchell T.K."/>
            <person name="Orbach M.J."/>
            <person name="Thon M.R."/>
            <person name="Kulkarni R."/>
            <person name="Xu J.-R."/>
            <person name="Pan H."/>
            <person name="Read N.D."/>
            <person name="Lee Y.-H."/>
            <person name="Carbone I."/>
            <person name="Brown D."/>
            <person name="Oh Y.Y."/>
            <person name="Donofrio N."/>
            <person name="Jeong J.S."/>
            <person name="Soanes D.M."/>
            <person name="Djonovic S."/>
            <person name="Kolomiets E."/>
            <person name="Rehmeyer C."/>
            <person name="Li W."/>
            <person name="Harding M."/>
            <person name="Kim S."/>
            <person name="Lebrun M.-H."/>
            <person name="Bohnert H."/>
            <person name="Coughlan S."/>
            <person name="Butler J."/>
            <person name="Calvo S.E."/>
            <person name="Ma L.-J."/>
            <person name="Nicol R."/>
            <person name="Purcell S."/>
            <person name="Nusbaum C."/>
            <person name="Galagan J.E."/>
            <person name="Birren B.W."/>
        </authorList>
    </citation>
    <scope>NUCLEOTIDE SEQUENCE [LARGE SCALE GENOMIC DNA]</scope>
    <source>
        <strain>70-15 / ATCC MYA-4617 / FGSC 8958</strain>
    </source>
</reference>
<reference key="2">
    <citation type="journal article" date="2014" name="Fungal Genet. Biol.">
        <title>Comparative functional analysis of the velvet gene family reveals unique roles in fungal development and pathogenicity in Magnaporthe oryzae.</title>
        <authorList>
            <person name="Kim H.J."/>
            <person name="Han J.H."/>
            <person name="Kim K.S."/>
            <person name="Lee Y.H."/>
        </authorList>
    </citation>
    <scope>FUNCTION</scope>
    <scope>DISRUPTION PHENOTYPE</scope>
</reference>
<comment type="function">
    <text evidence="1 4">Component of the velvet transcription factor complex that controls sexual/asexual developmental ratio in response to light, promoting sexual development in the darkness while stimulating asexual sporulation under illumination (By similarity). The velvet complex acts as a global regulator for secondary metabolite gene expression (By similarity). Regulates of the response to reactive oxygen species (ROS) stress (PubMed:24632440).</text>
</comment>
<comment type="subunit">
    <text evidence="1">Component of the heterotrimeric velvet complex composed of LAEA, VEA and VELB; VEA acting as a bridging protein between LAEA and VELB (By similarity).</text>
</comment>
<comment type="subcellular location">
    <subcellularLocation>
        <location evidence="1">Nucleus</location>
    </subcellularLocation>
    <subcellularLocation>
        <location evidence="1">Cytoplasm</location>
    </subcellularLocation>
    <text evidence="1">Enriched in the nucleus in the dark (By similarity).</text>
</comment>
<comment type="domain">
    <text evidence="1">The C-terminal PEST domain is a region rich in proline, glutamic acid, serine and threonine residues that is required for the light-dependent regulation of development and secondary metabolism (By similarity).</text>
</comment>
<comment type="disruption phenotype">
    <text evidence="4">Leads to reduced formation of conidia (PubMed:24632440).</text>
</comment>
<comment type="similarity">
    <text evidence="6">Belongs to the velvet family. VeA subfamily.</text>
</comment>
<gene>
    <name evidence="5" type="primary">VEA</name>
    <name type="ORF">MGG_08556</name>
</gene>
<name>VEA_PYRO7</name>
<proteinExistence type="inferred from homology"/>
<sequence>MKASTDHHVSGPPPVMIERVTRGGRRLFYRIDVIQQPEKCRACGSGPKSSTDRRPVDPPPVVELRIFEGPRFEEAKDITFTYNANFFLFATLEKARPMAHGRVTGPVVDAPPVLTGMPVSGMAYLDRPIEAGYFLFPDLSVRHEGTYRLSFNLYEETKDDRDKDMEPDEPSSEPQGFFYHRMEIKSADFACFSAKKFPGLGLSTPLSMTMAEQGTRVRIRRDVRMRRRDGKPSSGGGDFSSNSNNNAEDEAARRRRTRTPEPPAREDLRRSLSGTGDAPARNPEPQRRPSAADYRAPPPPNPPPPGFPSAQVPATSHLTFGGAPYGSHSQYQQPTSSSSSSEQVSSVPQSPAYSSHAAQQHYGQAPQPPTPTYPERRLSDHRSSQPNNHPQQSPHQHSYSHRSSPQRERFMPDSRRPSAPSHSHILSARPMTPQSANELRRPSDYNRPIPPPTDVLVADTQATPHLPPIRWPRPNMNLPSPPSEHQEALQPLQPAPLHYESQTHQQQLGGRKRTHDSYEEHSYSYGYSYSHNHSHGYGPTPSARPPAKNRKRPEDVEEKYTVTETMVVDRPEQFFPKPLKYVWTQCRAEPPPRE</sequence>
<feature type="chain" id="PRO_0000435907" description="Developmental and secondary metabolism regulator veA">
    <location>
        <begin position="1"/>
        <end position="594"/>
    </location>
</feature>
<feature type="domain" description="Velvet" evidence="2">
    <location>
        <begin position="24"/>
        <end position="220"/>
    </location>
</feature>
<feature type="region of interest" description="Disordered" evidence="3">
    <location>
        <begin position="40"/>
        <end position="59"/>
    </location>
</feature>
<feature type="region of interest" description="Disordered" evidence="3">
    <location>
        <begin position="210"/>
        <end position="558"/>
    </location>
</feature>
<feature type="region of interest" description="PEST" evidence="1">
    <location>
        <begin position="457"/>
        <end position="506"/>
    </location>
</feature>
<feature type="short sequence motif" description="Nuclear localization signal" evidence="1">
    <location>
        <begin position="38"/>
        <end position="43"/>
    </location>
</feature>
<feature type="compositionally biased region" description="Basic residues" evidence="3">
    <location>
        <begin position="217"/>
        <end position="229"/>
    </location>
</feature>
<feature type="compositionally biased region" description="Pro residues" evidence="3">
    <location>
        <begin position="296"/>
        <end position="307"/>
    </location>
</feature>
<feature type="compositionally biased region" description="Low complexity" evidence="3">
    <location>
        <begin position="327"/>
        <end position="351"/>
    </location>
</feature>
<feature type="compositionally biased region" description="Polar residues" evidence="3">
    <location>
        <begin position="352"/>
        <end position="362"/>
    </location>
</feature>
<feature type="compositionally biased region" description="Basic and acidic residues" evidence="3">
    <location>
        <begin position="374"/>
        <end position="383"/>
    </location>
</feature>
<feature type="compositionally biased region" description="Low complexity" evidence="3">
    <location>
        <begin position="384"/>
        <end position="403"/>
    </location>
</feature>
<feature type="compositionally biased region" description="Basic and acidic residues" evidence="3">
    <location>
        <begin position="405"/>
        <end position="416"/>
    </location>
</feature>
<feature type="compositionally biased region" description="Low complexity" evidence="3">
    <location>
        <begin position="523"/>
        <end position="538"/>
    </location>
</feature>
<organism>
    <name type="scientific">Pyricularia oryzae (strain 70-15 / ATCC MYA-4617 / FGSC 8958)</name>
    <name type="common">Rice blast fungus</name>
    <name type="synonym">Magnaporthe oryzae</name>
    <dbReference type="NCBI Taxonomy" id="242507"/>
    <lineage>
        <taxon>Eukaryota</taxon>
        <taxon>Fungi</taxon>
        <taxon>Dikarya</taxon>
        <taxon>Ascomycota</taxon>
        <taxon>Pezizomycotina</taxon>
        <taxon>Sordariomycetes</taxon>
        <taxon>Sordariomycetidae</taxon>
        <taxon>Magnaporthales</taxon>
        <taxon>Pyriculariaceae</taxon>
        <taxon>Pyricularia</taxon>
    </lineage>
</organism>
<evidence type="ECO:0000250" key="1">
    <source>
        <dbReference type="UniProtKB" id="C8VTV4"/>
    </source>
</evidence>
<evidence type="ECO:0000255" key="2">
    <source>
        <dbReference type="PROSITE-ProRule" id="PRU01165"/>
    </source>
</evidence>
<evidence type="ECO:0000256" key="3">
    <source>
        <dbReference type="SAM" id="MobiDB-lite"/>
    </source>
</evidence>
<evidence type="ECO:0000269" key="4">
    <source>
    </source>
</evidence>
<evidence type="ECO:0000303" key="5">
    <source>
    </source>
</evidence>
<evidence type="ECO:0000305" key="6"/>
<protein>
    <recommendedName>
        <fullName evidence="6">Developmental and secondary metabolism regulator veA</fullName>
    </recommendedName>
    <alternativeName>
        <fullName evidence="6">Velvet complex subunit A</fullName>
    </alternativeName>
</protein>